<sequence length="159" mass="17922">MQSTQDYIEMRLPASAEYVSLIRLTLSGVFSRAGASYDDIEDSKIAVSEAVTNAVKHAYKKNSEIGMINLCFEIFDDRIKIVISDQGESFDYEATKSHLGPYNDNENIDFLREGGLGLFLIESLMDEVTVYKESGVTISMIKYIKKEQVRNNGERVEIS</sequence>
<dbReference type="EC" id="2.7.11.1" evidence="1"/>
<dbReference type="EMBL" id="CP000029">
    <property type="protein sequence ID" value="AAW55034.1"/>
    <property type="molecule type" value="Genomic_DNA"/>
</dbReference>
<dbReference type="RefSeq" id="WP_001829903.1">
    <property type="nucleotide sequence ID" value="NC_002976.3"/>
</dbReference>
<dbReference type="SMR" id="Q5HMF0"/>
<dbReference type="STRING" id="176279.SERP1678"/>
<dbReference type="GeneID" id="50018230"/>
<dbReference type="KEGG" id="ser:SERP1678"/>
<dbReference type="eggNOG" id="COG2172">
    <property type="taxonomic scope" value="Bacteria"/>
</dbReference>
<dbReference type="HOGENOM" id="CLU_090336_11_1_9"/>
<dbReference type="Proteomes" id="UP000000531">
    <property type="component" value="Chromosome"/>
</dbReference>
<dbReference type="GO" id="GO:0005524">
    <property type="term" value="F:ATP binding"/>
    <property type="evidence" value="ECO:0007669"/>
    <property type="project" value="UniProtKB-KW"/>
</dbReference>
<dbReference type="GO" id="GO:0106310">
    <property type="term" value="F:protein serine kinase activity"/>
    <property type="evidence" value="ECO:0007669"/>
    <property type="project" value="RHEA"/>
</dbReference>
<dbReference type="GO" id="GO:0004674">
    <property type="term" value="F:protein serine/threonine kinase activity"/>
    <property type="evidence" value="ECO:0007669"/>
    <property type="project" value="UniProtKB-KW"/>
</dbReference>
<dbReference type="GO" id="GO:0016989">
    <property type="term" value="F:sigma factor antagonist activity"/>
    <property type="evidence" value="ECO:0007669"/>
    <property type="project" value="InterPro"/>
</dbReference>
<dbReference type="CDD" id="cd16936">
    <property type="entry name" value="HATPase_RsbW-like"/>
    <property type="match status" value="1"/>
</dbReference>
<dbReference type="Gene3D" id="3.30.565.10">
    <property type="entry name" value="Histidine kinase-like ATPase, C-terminal domain"/>
    <property type="match status" value="1"/>
</dbReference>
<dbReference type="HAMAP" id="MF_00638">
    <property type="entry name" value="Anti_sigma_B"/>
    <property type="match status" value="1"/>
</dbReference>
<dbReference type="InterPro" id="IPR050267">
    <property type="entry name" value="Anti-sigma-factor_SerPK"/>
</dbReference>
<dbReference type="InterPro" id="IPR036890">
    <property type="entry name" value="HATPase_C_sf"/>
</dbReference>
<dbReference type="InterPro" id="IPR010193">
    <property type="entry name" value="RsbW"/>
</dbReference>
<dbReference type="NCBIfam" id="NF003144">
    <property type="entry name" value="PRK04069.1"/>
    <property type="match status" value="1"/>
</dbReference>
<dbReference type="NCBIfam" id="TIGR01924">
    <property type="entry name" value="rsbW_low_gc"/>
    <property type="match status" value="1"/>
</dbReference>
<dbReference type="PANTHER" id="PTHR35526">
    <property type="entry name" value="ANTI-SIGMA-F FACTOR RSBW-RELATED"/>
    <property type="match status" value="1"/>
</dbReference>
<dbReference type="PANTHER" id="PTHR35526:SF9">
    <property type="entry name" value="SERINE-PROTEIN KINASE RSBW"/>
    <property type="match status" value="1"/>
</dbReference>
<dbReference type="Pfam" id="PF13581">
    <property type="entry name" value="HATPase_c_2"/>
    <property type="match status" value="1"/>
</dbReference>
<dbReference type="SUPFAM" id="SSF55874">
    <property type="entry name" value="ATPase domain of HSP90 chaperone/DNA topoisomerase II/histidine kinase"/>
    <property type="match status" value="1"/>
</dbReference>
<protein>
    <recommendedName>
        <fullName evidence="1">Serine-protein kinase RsbW</fullName>
        <ecNumber evidence="1">2.7.11.1</ecNumber>
    </recommendedName>
    <alternativeName>
        <fullName evidence="1">Anti-sigma-B factor</fullName>
    </alternativeName>
    <alternativeName>
        <fullName evidence="1">Sigma-B negative effector RsbW</fullName>
    </alternativeName>
</protein>
<keyword id="KW-0067">ATP-binding</keyword>
<keyword id="KW-0418">Kinase</keyword>
<keyword id="KW-0547">Nucleotide-binding</keyword>
<keyword id="KW-1185">Reference proteome</keyword>
<keyword id="KW-0723">Serine/threonine-protein kinase</keyword>
<keyword id="KW-0808">Transferase</keyword>
<comment type="function">
    <text evidence="1">Negative regulator of sigma-B activity. Phosphorylates and inactivates its specific antagonist protein, RsbV. Upon phosphorylation of RsbV, RsbW is released and binds to sigma-B, thereby blocking its ability to form an RNA polymerase holoenzyme (E-sigma-B).</text>
</comment>
<comment type="catalytic activity">
    <reaction evidence="1">
        <text>L-seryl-[protein] + ATP = O-phospho-L-seryl-[protein] + ADP + H(+)</text>
        <dbReference type="Rhea" id="RHEA:17989"/>
        <dbReference type="Rhea" id="RHEA-COMP:9863"/>
        <dbReference type="Rhea" id="RHEA-COMP:11604"/>
        <dbReference type="ChEBI" id="CHEBI:15378"/>
        <dbReference type="ChEBI" id="CHEBI:29999"/>
        <dbReference type="ChEBI" id="CHEBI:30616"/>
        <dbReference type="ChEBI" id="CHEBI:83421"/>
        <dbReference type="ChEBI" id="CHEBI:456216"/>
        <dbReference type="EC" id="2.7.11.1"/>
    </reaction>
</comment>
<comment type="catalytic activity">
    <reaction evidence="1">
        <text>L-threonyl-[protein] + ATP = O-phospho-L-threonyl-[protein] + ADP + H(+)</text>
        <dbReference type="Rhea" id="RHEA:46608"/>
        <dbReference type="Rhea" id="RHEA-COMP:11060"/>
        <dbReference type="Rhea" id="RHEA-COMP:11605"/>
        <dbReference type="ChEBI" id="CHEBI:15378"/>
        <dbReference type="ChEBI" id="CHEBI:30013"/>
        <dbReference type="ChEBI" id="CHEBI:30616"/>
        <dbReference type="ChEBI" id="CHEBI:61977"/>
        <dbReference type="ChEBI" id="CHEBI:456216"/>
        <dbReference type="EC" id="2.7.11.1"/>
    </reaction>
</comment>
<comment type="similarity">
    <text evidence="1">Belongs to the anti-sigma-factor family.</text>
</comment>
<feature type="chain" id="PRO_0000203547" description="Serine-protein kinase RsbW">
    <location>
        <begin position="1"/>
        <end position="159"/>
    </location>
</feature>
<accession>Q5HMF0</accession>
<organism>
    <name type="scientific">Staphylococcus epidermidis (strain ATCC 35984 / DSM 28319 / BCRC 17069 / CCUG 31568 / BM 3577 / RP62A)</name>
    <dbReference type="NCBI Taxonomy" id="176279"/>
    <lineage>
        <taxon>Bacteria</taxon>
        <taxon>Bacillati</taxon>
        <taxon>Bacillota</taxon>
        <taxon>Bacilli</taxon>
        <taxon>Bacillales</taxon>
        <taxon>Staphylococcaceae</taxon>
        <taxon>Staphylococcus</taxon>
    </lineage>
</organism>
<reference key="1">
    <citation type="journal article" date="2005" name="J. Bacteriol.">
        <title>Insights on evolution of virulence and resistance from the complete genome analysis of an early methicillin-resistant Staphylococcus aureus strain and a biofilm-producing methicillin-resistant Staphylococcus epidermidis strain.</title>
        <authorList>
            <person name="Gill S.R."/>
            <person name="Fouts D.E."/>
            <person name="Archer G.L."/>
            <person name="Mongodin E.F."/>
            <person name="DeBoy R.T."/>
            <person name="Ravel J."/>
            <person name="Paulsen I.T."/>
            <person name="Kolonay J.F."/>
            <person name="Brinkac L.M."/>
            <person name="Beanan M.J."/>
            <person name="Dodson R.J."/>
            <person name="Daugherty S.C."/>
            <person name="Madupu R."/>
            <person name="Angiuoli S.V."/>
            <person name="Durkin A.S."/>
            <person name="Haft D.H."/>
            <person name="Vamathevan J.J."/>
            <person name="Khouri H."/>
            <person name="Utterback T.R."/>
            <person name="Lee C."/>
            <person name="Dimitrov G."/>
            <person name="Jiang L."/>
            <person name="Qin H."/>
            <person name="Weidman J."/>
            <person name="Tran K."/>
            <person name="Kang K.H."/>
            <person name="Hance I.R."/>
            <person name="Nelson K.E."/>
            <person name="Fraser C.M."/>
        </authorList>
    </citation>
    <scope>NUCLEOTIDE SEQUENCE [LARGE SCALE GENOMIC DNA]</scope>
    <source>
        <strain>ATCC 35984 / DSM 28319 / BCRC 17069 / CCUG 31568 / BM 3577 / RP62A</strain>
    </source>
</reference>
<name>RSBW_STAEQ</name>
<proteinExistence type="inferred from homology"/>
<gene>
    <name evidence="1" type="primary">rsbW</name>
    <name type="ordered locus">SERP1678</name>
</gene>
<evidence type="ECO:0000255" key="1">
    <source>
        <dbReference type="HAMAP-Rule" id="MF_00638"/>
    </source>
</evidence>